<comment type="function">
    <text evidence="1">Catalyzes a reversible aldol reaction between acetaldehyde and D-glyceraldehyde 3-phosphate to generate 2-deoxy-D-ribose 5-phosphate.</text>
</comment>
<comment type="catalytic activity">
    <reaction evidence="1">
        <text>2-deoxy-D-ribose 5-phosphate = D-glyceraldehyde 3-phosphate + acetaldehyde</text>
        <dbReference type="Rhea" id="RHEA:12821"/>
        <dbReference type="ChEBI" id="CHEBI:15343"/>
        <dbReference type="ChEBI" id="CHEBI:59776"/>
        <dbReference type="ChEBI" id="CHEBI:62877"/>
        <dbReference type="EC" id="4.1.2.4"/>
    </reaction>
</comment>
<comment type="pathway">
    <text evidence="1">Carbohydrate degradation; 2-deoxy-D-ribose 1-phosphate degradation; D-glyceraldehyde 3-phosphate and acetaldehyde from 2-deoxy-alpha-D-ribose 1-phosphate: step 2/2.</text>
</comment>
<comment type="subcellular location">
    <subcellularLocation>
        <location evidence="1">Cytoplasm</location>
    </subcellularLocation>
</comment>
<comment type="similarity">
    <text evidence="1">Belongs to the DeoC/FbaB aldolase family. DeoC type 1 subfamily.</text>
</comment>
<evidence type="ECO:0000255" key="1">
    <source>
        <dbReference type="HAMAP-Rule" id="MF_00114"/>
    </source>
</evidence>
<organism>
    <name type="scientific">Listeria monocytogenes serotype 4a (strain HCC23)</name>
    <dbReference type="NCBI Taxonomy" id="552536"/>
    <lineage>
        <taxon>Bacteria</taxon>
        <taxon>Bacillati</taxon>
        <taxon>Bacillota</taxon>
        <taxon>Bacilli</taxon>
        <taxon>Bacillales</taxon>
        <taxon>Listeriaceae</taxon>
        <taxon>Listeria</taxon>
    </lineage>
</organism>
<feature type="chain" id="PRO_1000119178" description="Deoxyribose-phosphate aldolase">
    <location>
        <begin position="1"/>
        <end position="223"/>
    </location>
</feature>
<feature type="active site" description="Proton donor/acceptor" evidence="1">
    <location>
        <position position="89"/>
    </location>
</feature>
<feature type="active site" description="Schiff-base intermediate with acetaldehyde" evidence="1">
    <location>
        <position position="152"/>
    </location>
</feature>
<feature type="active site" description="Proton donor/acceptor" evidence="1">
    <location>
        <position position="181"/>
    </location>
</feature>
<accession>B8DBT6</accession>
<protein>
    <recommendedName>
        <fullName evidence="1">Deoxyribose-phosphate aldolase</fullName>
        <shortName evidence="1">DERA</shortName>
        <ecNumber evidence="1">4.1.2.4</ecNumber>
    </recommendedName>
    <alternativeName>
        <fullName evidence="1">2-deoxy-D-ribose 5-phosphate aldolase</fullName>
    </alternativeName>
    <alternativeName>
        <fullName evidence="1">Phosphodeoxyriboaldolase</fullName>
        <shortName evidence="1">Deoxyriboaldolase</shortName>
    </alternativeName>
</protein>
<reference key="1">
    <citation type="journal article" date="2011" name="J. Bacteriol.">
        <title>Genome sequence of lineage III Listeria monocytogenes strain HCC23.</title>
        <authorList>
            <person name="Steele C.L."/>
            <person name="Donaldson J.R."/>
            <person name="Paul D."/>
            <person name="Banes M.M."/>
            <person name="Arick T."/>
            <person name="Bridges S.M."/>
            <person name="Lawrence M.L."/>
        </authorList>
    </citation>
    <scope>NUCLEOTIDE SEQUENCE [LARGE SCALE GENOMIC DNA]</scope>
    <source>
        <strain>HCC23</strain>
    </source>
</reference>
<gene>
    <name evidence="1" type="primary">deoC</name>
    <name type="ordered locus">LMHCC_0565</name>
</gene>
<name>DEOC_LISMH</name>
<sequence length="223" mass="23479">MTIAKMIDHTALKPDTTKEQILALTKEAREYGFASVCVNPTWVKLSAEQLAGAESVVCTVIGFPLGANTPEVKAFEVKDAIQNGAKEVDMVINIGALKDKDDELVERDIRAVVDAAKGKALVKVIIETCLLTDEEKVRACEIAVKAGTDFVKTSTGFSTGGATAEDIALMRKTVGPNIGVKASGGVRTKEDVEKMIEAGATRIGASAGVAIVSGEKPAKPDNY</sequence>
<proteinExistence type="inferred from homology"/>
<dbReference type="EC" id="4.1.2.4" evidence="1"/>
<dbReference type="EMBL" id="CP001175">
    <property type="protein sequence ID" value="ACK38922.1"/>
    <property type="molecule type" value="Genomic_DNA"/>
</dbReference>
<dbReference type="RefSeq" id="WP_012581029.1">
    <property type="nucleotide sequence ID" value="NC_011660.1"/>
</dbReference>
<dbReference type="SMR" id="B8DBT6"/>
<dbReference type="KEGG" id="lmh:LMHCC_0565"/>
<dbReference type="HOGENOM" id="CLU_053595_0_1_9"/>
<dbReference type="UniPathway" id="UPA00002">
    <property type="reaction ID" value="UER00468"/>
</dbReference>
<dbReference type="GO" id="GO:0005737">
    <property type="term" value="C:cytoplasm"/>
    <property type="evidence" value="ECO:0007669"/>
    <property type="project" value="UniProtKB-SubCell"/>
</dbReference>
<dbReference type="GO" id="GO:0004139">
    <property type="term" value="F:deoxyribose-phosphate aldolase activity"/>
    <property type="evidence" value="ECO:0007669"/>
    <property type="project" value="UniProtKB-UniRule"/>
</dbReference>
<dbReference type="GO" id="GO:0006018">
    <property type="term" value="P:2-deoxyribose 1-phosphate catabolic process"/>
    <property type="evidence" value="ECO:0007669"/>
    <property type="project" value="UniProtKB-UniRule"/>
</dbReference>
<dbReference type="GO" id="GO:0016052">
    <property type="term" value="P:carbohydrate catabolic process"/>
    <property type="evidence" value="ECO:0007669"/>
    <property type="project" value="TreeGrafter"/>
</dbReference>
<dbReference type="GO" id="GO:0009264">
    <property type="term" value="P:deoxyribonucleotide catabolic process"/>
    <property type="evidence" value="ECO:0007669"/>
    <property type="project" value="InterPro"/>
</dbReference>
<dbReference type="CDD" id="cd00959">
    <property type="entry name" value="DeoC"/>
    <property type="match status" value="1"/>
</dbReference>
<dbReference type="FunFam" id="3.20.20.70:FF:000044">
    <property type="entry name" value="Deoxyribose-phosphate aldolase"/>
    <property type="match status" value="1"/>
</dbReference>
<dbReference type="Gene3D" id="3.20.20.70">
    <property type="entry name" value="Aldolase class I"/>
    <property type="match status" value="1"/>
</dbReference>
<dbReference type="HAMAP" id="MF_00114">
    <property type="entry name" value="DeoC_type1"/>
    <property type="match status" value="1"/>
</dbReference>
<dbReference type="InterPro" id="IPR013785">
    <property type="entry name" value="Aldolase_TIM"/>
</dbReference>
<dbReference type="InterPro" id="IPR011343">
    <property type="entry name" value="DeoC"/>
</dbReference>
<dbReference type="InterPro" id="IPR002915">
    <property type="entry name" value="DeoC/FbaB/LacD_aldolase"/>
</dbReference>
<dbReference type="InterPro" id="IPR028581">
    <property type="entry name" value="DeoC_typeI"/>
</dbReference>
<dbReference type="NCBIfam" id="TIGR00126">
    <property type="entry name" value="deoC"/>
    <property type="match status" value="1"/>
</dbReference>
<dbReference type="PANTHER" id="PTHR10889">
    <property type="entry name" value="DEOXYRIBOSE-PHOSPHATE ALDOLASE"/>
    <property type="match status" value="1"/>
</dbReference>
<dbReference type="PANTHER" id="PTHR10889:SF1">
    <property type="entry name" value="DEOXYRIBOSE-PHOSPHATE ALDOLASE"/>
    <property type="match status" value="1"/>
</dbReference>
<dbReference type="Pfam" id="PF01791">
    <property type="entry name" value="DeoC"/>
    <property type="match status" value="1"/>
</dbReference>
<dbReference type="PIRSF" id="PIRSF001357">
    <property type="entry name" value="DeoC"/>
    <property type="match status" value="1"/>
</dbReference>
<dbReference type="SMART" id="SM01133">
    <property type="entry name" value="DeoC"/>
    <property type="match status" value="1"/>
</dbReference>
<dbReference type="SUPFAM" id="SSF51569">
    <property type="entry name" value="Aldolase"/>
    <property type="match status" value="1"/>
</dbReference>
<keyword id="KW-0963">Cytoplasm</keyword>
<keyword id="KW-0456">Lyase</keyword>
<keyword id="KW-0704">Schiff base</keyword>